<keyword id="KW-0413">Isomerase</keyword>
<keyword id="KW-0444">Lipid biosynthesis</keyword>
<keyword id="KW-0443">Lipid metabolism</keyword>
<keyword id="KW-0472">Membrane</keyword>
<keyword id="KW-0677">Repeat</keyword>
<keyword id="KW-0752">Steroid biosynthesis</keyword>
<keyword id="KW-0753">Steroid metabolism</keyword>
<keyword id="KW-0756">Sterol biosynthesis</keyword>
<keyword id="KW-1207">Sterol metabolism</keyword>
<keyword id="KW-0812">Transmembrane</keyword>
<keyword id="KW-1133">Transmembrane helix</keyword>
<proteinExistence type="evidence at protein level"/>
<protein>
    <recommendedName>
        <fullName evidence="5">Cycloartenol Synthase</fullName>
        <shortName evidence="6">PgCAS</shortName>
        <ecNumber evidence="3">5.4.99.8</ecNumber>
    </recommendedName>
    <alternativeName>
        <fullName evidence="4">Phytosterol synthase</fullName>
    </alternativeName>
</protein>
<name>CAS1_PANGI</name>
<gene>
    <name evidence="5" type="primary">OSCPNX1</name>
    <name evidence="6" type="synonym">CAS</name>
    <name evidence="4" type="synonym">PNX</name>
</gene>
<organism>
    <name type="scientific">Panax ginseng</name>
    <name type="common">Korean ginseng</name>
    <dbReference type="NCBI Taxonomy" id="4054"/>
    <lineage>
        <taxon>Eukaryota</taxon>
        <taxon>Viridiplantae</taxon>
        <taxon>Streptophyta</taxon>
        <taxon>Embryophyta</taxon>
        <taxon>Tracheophyta</taxon>
        <taxon>Spermatophyta</taxon>
        <taxon>Magnoliopsida</taxon>
        <taxon>eudicotyledons</taxon>
        <taxon>Gunneridae</taxon>
        <taxon>Pentapetalae</taxon>
        <taxon>asterids</taxon>
        <taxon>campanulids</taxon>
        <taxon>Apiales</taxon>
        <taxon>Araliaceae</taxon>
        <taxon>Panax</taxon>
    </lineage>
</organism>
<sequence length="758" mass="86109">MWKLKIAEGGNPWLRTLNDHVGRQIWEFDPNIGSPEELAEVEKVRENFRNHRFEKKHSADLLMRIQFANENPGSVVLPQVKVNDGEDISEDKVTVTLKRAMSFYSTLQAHDGHWPGDYGGPMFLMPGLVITLSITGVLNVVLSKEHKREICRYLYNHQNRDGGWGLHIEGPSTMFGTVLNYVTLRLLGEGANDGQGAMEKGRQWILDHGSATAITSWGKMWLSVLGVFEWSGNNPLPPETWLLPYILPIHPGRMWCHRRMVYLPMSYLYGKRFVGPITPTVLSLRKEVFSVPYHEIDWNQARNLCAKEDLYYPHPLIQDILWASLDKVWEPIFMHWPAKKLREKSLRTVMEHIHYEDENTRYICIGPVNKVLNMLCCWVEDPNSEAFKLHLPRLHDFLWLAEDGMKMQGYNGSQLWDTAFAVQAIISTNLAEEYGPTLRKAHTFMKNSQVLDDCPGDLDAWYRHVSKGAWPFSTADHGWPISDCTAEGFKAVLQLSKLPSELVGEPLDAKRLYDAVNVILSLQNSDGGYATYELTRSYSWLELVNPAETFGDIVIDYPYVECTSAAIQALTAFKKLFPGHRREEIQHSIEKAALFIEKIQSSDGSWYGSWGVCFTYGTWFGIKGLVTAGRTFSSCASIRKACDFLLSKQVASGGWGESYLSCQNKVYTNLEGNRSHVVNTGWAMLALIDAGQAERDATPLHRAAKLLINSQMENGDFPQEEIMGVFDKNCMITYAAYRNIFPIWALGEYRCRVLQGPS</sequence>
<accession>O82139</accession>
<reference key="1">
    <citation type="journal article" date="1998" name="Eur. J. Biochem.">
        <title>Beta-amyrin synthase--cloning of oxidosqualene cyclase that catalyzes the formation of the most popular triterpene among higher plants.</title>
        <authorList>
            <person name="Kushiro T."/>
            <person name="Shibuya M."/>
            <person name="Ebizuka Y."/>
        </authorList>
    </citation>
    <scope>NUCLEOTIDE SEQUENCE [MRNA]</scope>
    <scope>FUNCTION</scope>
    <scope>CATALYTIC ACTIVITY</scope>
    <source>
        <tissue>Root</tissue>
    </source>
</reference>
<reference key="2">
    <citation type="journal article" date="2013" name="J. Ginseng Res.">
        <title>The improvement of ginsenoside accumulation in Panax ginseng as a result of gamma-irradiation.</title>
        <authorList>
            <person name="Kim D.S."/>
            <person name="Song M."/>
            <person name="Kim S.-H."/>
            <person name="Jang D.-S."/>
            <person name="Kim J.-B."/>
            <person name="Ha B.-K."/>
            <person name="Kim S.H."/>
            <person name="Lee K.J."/>
            <person name="Kang S.-Y."/>
            <person name="Jeong I.Y."/>
        </authorList>
    </citation>
    <scope>GENE FAMILY</scope>
</reference>
<comment type="function">
    <text evidence="3 6">Component of the phytosterols biosynthetic pathways (Probable). Oxidosqualene cyclase converting oxidosqualene to cycloartenol (PubMed:9746369).</text>
</comment>
<comment type="catalytic activity">
    <reaction evidence="3">
        <text>(S)-2,3-epoxysqualene = cycloartenol</text>
        <dbReference type="Rhea" id="RHEA:21308"/>
        <dbReference type="ChEBI" id="CHEBI:15441"/>
        <dbReference type="ChEBI" id="CHEBI:17030"/>
        <dbReference type="EC" id="5.4.99.8"/>
    </reaction>
</comment>
<comment type="pathway">
    <text evidence="6">Secondary metabolite biosynthesis; terpenoid biosynthesis.</text>
</comment>
<comment type="subcellular location">
    <subcellularLocation>
        <location evidence="2">Membrane</location>
        <topology evidence="2">Single-pass membrane protein</topology>
    </subcellularLocation>
</comment>
<comment type="similarity">
    <text evidence="6">Belongs to the terpene cyclase/mutase family.</text>
</comment>
<feature type="chain" id="PRO_0000413964" description="Cycloartenol Synthase">
    <location>
        <begin position="1"/>
        <end position="758"/>
    </location>
</feature>
<feature type="transmembrane region" description="Helical" evidence="2">
    <location>
        <begin position="122"/>
        <end position="142"/>
    </location>
</feature>
<feature type="repeat" description="PFTB 1" evidence="2">
    <location>
        <begin position="147"/>
        <end position="188"/>
    </location>
</feature>
<feature type="repeat" description="PFTB 2" evidence="2">
    <location>
        <begin position="512"/>
        <end position="557"/>
    </location>
</feature>
<feature type="repeat" description="PFTB 3" evidence="2">
    <location>
        <begin position="589"/>
        <end position="629"/>
    </location>
</feature>
<feature type="repeat" description="PFTB 4" evidence="2">
    <location>
        <begin position="638"/>
        <end position="679"/>
    </location>
</feature>
<feature type="repeat" description="PFTB 5" evidence="2">
    <location>
        <begin position="700"/>
        <end position="747"/>
    </location>
</feature>
<feature type="active site" description="Proton donor" evidence="1">
    <location>
        <position position="483"/>
    </location>
</feature>
<dbReference type="EC" id="5.4.99.8" evidence="3"/>
<dbReference type="EMBL" id="AB009029">
    <property type="protein sequence ID" value="BAA33460.1"/>
    <property type="molecule type" value="mRNA"/>
</dbReference>
<dbReference type="SMR" id="O82139"/>
<dbReference type="BioCyc" id="MetaCyc:MONOMER-13453"/>
<dbReference type="BRENDA" id="5.4.99.8">
    <property type="organism ID" value="7895"/>
</dbReference>
<dbReference type="UniPathway" id="UPA00213"/>
<dbReference type="GO" id="GO:0005811">
    <property type="term" value="C:lipid droplet"/>
    <property type="evidence" value="ECO:0007669"/>
    <property type="project" value="InterPro"/>
</dbReference>
<dbReference type="GO" id="GO:0016020">
    <property type="term" value="C:membrane"/>
    <property type="evidence" value="ECO:0007669"/>
    <property type="project" value="UniProtKB-SubCell"/>
</dbReference>
<dbReference type="GO" id="GO:0016871">
    <property type="term" value="F:cycloartenol synthase activity"/>
    <property type="evidence" value="ECO:0000314"/>
    <property type="project" value="UniProtKB"/>
</dbReference>
<dbReference type="GO" id="GO:0019745">
    <property type="term" value="P:pentacyclic triterpenoid biosynthetic process"/>
    <property type="evidence" value="ECO:0000314"/>
    <property type="project" value="UniProtKB"/>
</dbReference>
<dbReference type="GO" id="GO:0016126">
    <property type="term" value="P:sterol biosynthetic process"/>
    <property type="evidence" value="ECO:0007669"/>
    <property type="project" value="UniProtKB-KW"/>
</dbReference>
<dbReference type="CDD" id="cd02892">
    <property type="entry name" value="SQCY_1"/>
    <property type="match status" value="1"/>
</dbReference>
<dbReference type="FunFam" id="1.50.10.20:FF:000002">
    <property type="entry name" value="Terpene cyclase/mutase family member"/>
    <property type="match status" value="1"/>
</dbReference>
<dbReference type="FunFam" id="1.50.10.20:FF:000022">
    <property type="entry name" value="Terpene cyclase/mutase family member"/>
    <property type="match status" value="1"/>
</dbReference>
<dbReference type="Gene3D" id="1.50.10.20">
    <property type="match status" value="2"/>
</dbReference>
<dbReference type="InterPro" id="IPR032696">
    <property type="entry name" value="SQ_cyclase_C"/>
</dbReference>
<dbReference type="InterPro" id="IPR032697">
    <property type="entry name" value="SQ_cyclase_N"/>
</dbReference>
<dbReference type="InterPro" id="IPR018333">
    <property type="entry name" value="Squalene_cyclase"/>
</dbReference>
<dbReference type="InterPro" id="IPR002365">
    <property type="entry name" value="Terpene_synthase_CS"/>
</dbReference>
<dbReference type="InterPro" id="IPR008930">
    <property type="entry name" value="Terpenoid_cyclase/PrenylTrfase"/>
</dbReference>
<dbReference type="NCBIfam" id="TIGR01787">
    <property type="entry name" value="squalene_cyclas"/>
    <property type="match status" value="1"/>
</dbReference>
<dbReference type="PANTHER" id="PTHR11764:SF20">
    <property type="entry name" value="LANOSTEROL SYNTHASE"/>
    <property type="match status" value="1"/>
</dbReference>
<dbReference type="PANTHER" id="PTHR11764">
    <property type="entry name" value="TERPENE CYCLASE/MUTASE FAMILY MEMBER"/>
    <property type="match status" value="1"/>
</dbReference>
<dbReference type="Pfam" id="PF13243">
    <property type="entry name" value="SQHop_cyclase_C"/>
    <property type="match status" value="1"/>
</dbReference>
<dbReference type="Pfam" id="PF13249">
    <property type="entry name" value="SQHop_cyclase_N"/>
    <property type="match status" value="1"/>
</dbReference>
<dbReference type="SFLD" id="SFLDG01016">
    <property type="entry name" value="Prenyltransferase_Like_2"/>
    <property type="match status" value="1"/>
</dbReference>
<dbReference type="SUPFAM" id="SSF48239">
    <property type="entry name" value="Terpenoid cyclases/Protein prenyltransferases"/>
    <property type="match status" value="2"/>
</dbReference>
<dbReference type="PROSITE" id="PS01074">
    <property type="entry name" value="TERPENE_SYNTHASES"/>
    <property type="match status" value="1"/>
</dbReference>
<evidence type="ECO:0000250" key="1">
    <source>
        <dbReference type="UniProtKB" id="P48449"/>
    </source>
</evidence>
<evidence type="ECO:0000255" key="2"/>
<evidence type="ECO:0000269" key="3">
    <source>
    </source>
</evidence>
<evidence type="ECO:0000303" key="4">
    <source>
    </source>
</evidence>
<evidence type="ECO:0000303" key="5">
    <source>
    </source>
</evidence>
<evidence type="ECO:0000305" key="6"/>